<dbReference type="PIR" id="A04499">
    <property type="entry name" value="QQAG7T"/>
</dbReference>
<dbReference type="SMR" id="P0A3T0"/>
<dbReference type="InterPro" id="IPR006064">
    <property type="entry name" value="Glycosidase"/>
</dbReference>
<dbReference type="Pfam" id="PF02027">
    <property type="entry name" value="RolB_RolC"/>
    <property type="match status" value="1"/>
</dbReference>
<geneLocation type="plasmid">
    <name>pTiAch5</name>
</geneLocation>
<reference key="1">
    <citation type="journal article" date="1984" name="EMBO J.">
        <title>The complete nucleotide sequence of the TL-DNA of the Agrobacterium tumefaciens plasmid pTiAch5.</title>
        <authorList>
            <person name="Gielen J."/>
            <person name="de Beuckeleer M."/>
            <person name="Seurinck J."/>
            <person name="Deboeck F."/>
            <person name="de Greve H."/>
            <person name="Lemmers M."/>
            <person name="van Montagu M."/>
            <person name="Schell J."/>
        </authorList>
    </citation>
    <scope>NUCLEOTIDE SEQUENCE [GENOMIC DNA]</scope>
</reference>
<organism>
    <name type="scientific">Agrobacterium tumefaciens (strain Ach5)</name>
    <dbReference type="NCBI Taxonomy" id="176298"/>
    <lineage>
        <taxon>Bacteria</taxon>
        <taxon>Pseudomonadati</taxon>
        <taxon>Pseudomonadota</taxon>
        <taxon>Alphaproteobacteria</taxon>
        <taxon>Hyphomicrobiales</taxon>
        <taxon>Rhizobiaceae</taxon>
        <taxon>Rhizobium/Agrobacterium group</taxon>
        <taxon>Agrobacterium</taxon>
        <taxon>Agrobacterium tumefaciens complex</taxon>
    </lineage>
</organism>
<accession>P0A3T0</accession>
<accession>P04031</accession>
<evidence type="ECO:0000256" key="1">
    <source>
        <dbReference type="SAM" id="MobiDB-lite"/>
    </source>
</evidence>
<protein>
    <recommendedName>
        <fullName>Protein 6b</fullName>
    </recommendedName>
</protein>
<sequence length="207" mass="23451">MTVANWQVRDLTLILRTGEMKSRLEQARTDFGALLSETVYFQPSAIRLGEFDDEYIHSRQELVYVYLREDIARQCALRRNLPSNSSNFGTMATAIPPWLMNARSLNRVMQERCDQGGLVNYYQGPHTNQFFLAIMPSNCFVRFGTDIINNENYGFYARGGNYTEEGEDDDDEMDDEGEAGGAEPRECQIGNLINYPIIALGSCDLSA</sequence>
<comment type="function">
    <text>Involved in tumor formation and increases auxin and cytokinin effects in host plants.</text>
</comment>
<gene>
    <name type="primary">6b</name>
</gene>
<name>6B1_AGRT4</name>
<feature type="chain" id="PRO_0000064395" description="Protein 6b">
    <location>
        <begin position="1"/>
        <end position="207"/>
    </location>
</feature>
<feature type="region of interest" description="Disordered" evidence="1">
    <location>
        <begin position="160"/>
        <end position="183"/>
    </location>
</feature>
<feature type="compositionally biased region" description="Acidic residues" evidence="1">
    <location>
        <begin position="164"/>
        <end position="178"/>
    </location>
</feature>
<keyword id="KW-0192">Crown gall tumor</keyword>
<keyword id="KW-0614">Plasmid</keyword>
<proteinExistence type="predicted"/>